<dbReference type="EC" id="2.7.7.60" evidence="1"/>
<dbReference type="EMBL" id="CP000285">
    <property type="protein sequence ID" value="ABE59985.1"/>
    <property type="molecule type" value="Genomic_DNA"/>
</dbReference>
<dbReference type="RefSeq" id="WP_011507931.1">
    <property type="nucleotide sequence ID" value="NC_007963.1"/>
</dbReference>
<dbReference type="SMR" id="Q1QU73"/>
<dbReference type="STRING" id="290398.Csal_2638"/>
<dbReference type="GeneID" id="95335336"/>
<dbReference type="KEGG" id="csa:Csal_2638"/>
<dbReference type="eggNOG" id="COG1211">
    <property type="taxonomic scope" value="Bacteria"/>
</dbReference>
<dbReference type="HOGENOM" id="CLU_061281_3_1_6"/>
<dbReference type="OrthoDB" id="9806837at2"/>
<dbReference type="UniPathway" id="UPA00056">
    <property type="reaction ID" value="UER00093"/>
</dbReference>
<dbReference type="Proteomes" id="UP000000239">
    <property type="component" value="Chromosome"/>
</dbReference>
<dbReference type="GO" id="GO:0050518">
    <property type="term" value="F:2-C-methyl-D-erythritol 4-phosphate cytidylyltransferase activity"/>
    <property type="evidence" value="ECO:0007669"/>
    <property type="project" value="UniProtKB-UniRule"/>
</dbReference>
<dbReference type="GO" id="GO:0019288">
    <property type="term" value="P:isopentenyl diphosphate biosynthetic process, methylerythritol 4-phosphate pathway"/>
    <property type="evidence" value="ECO:0007669"/>
    <property type="project" value="UniProtKB-UniRule"/>
</dbReference>
<dbReference type="CDD" id="cd02516">
    <property type="entry name" value="CDP-ME_synthetase"/>
    <property type="match status" value="1"/>
</dbReference>
<dbReference type="FunFam" id="3.90.550.10:FF:000003">
    <property type="entry name" value="2-C-methyl-D-erythritol 4-phosphate cytidylyltransferase"/>
    <property type="match status" value="1"/>
</dbReference>
<dbReference type="Gene3D" id="3.90.550.10">
    <property type="entry name" value="Spore Coat Polysaccharide Biosynthesis Protein SpsA, Chain A"/>
    <property type="match status" value="1"/>
</dbReference>
<dbReference type="HAMAP" id="MF_00108">
    <property type="entry name" value="IspD"/>
    <property type="match status" value="1"/>
</dbReference>
<dbReference type="InterPro" id="IPR001228">
    <property type="entry name" value="IspD"/>
</dbReference>
<dbReference type="InterPro" id="IPR034683">
    <property type="entry name" value="IspD/TarI"/>
</dbReference>
<dbReference type="InterPro" id="IPR050088">
    <property type="entry name" value="IspD/TarI_cytidylyltransf_bact"/>
</dbReference>
<dbReference type="InterPro" id="IPR018294">
    <property type="entry name" value="ISPD_synthase_CS"/>
</dbReference>
<dbReference type="InterPro" id="IPR029044">
    <property type="entry name" value="Nucleotide-diphossugar_trans"/>
</dbReference>
<dbReference type="NCBIfam" id="TIGR00453">
    <property type="entry name" value="ispD"/>
    <property type="match status" value="1"/>
</dbReference>
<dbReference type="PANTHER" id="PTHR32125">
    <property type="entry name" value="2-C-METHYL-D-ERYTHRITOL 4-PHOSPHATE CYTIDYLYLTRANSFERASE, CHLOROPLASTIC"/>
    <property type="match status" value="1"/>
</dbReference>
<dbReference type="PANTHER" id="PTHR32125:SF4">
    <property type="entry name" value="2-C-METHYL-D-ERYTHRITOL 4-PHOSPHATE CYTIDYLYLTRANSFERASE, CHLOROPLASTIC"/>
    <property type="match status" value="1"/>
</dbReference>
<dbReference type="Pfam" id="PF01128">
    <property type="entry name" value="IspD"/>
    <property type="match status" value="1"/>
</dbReference>
<dbReference type="SUPFAM" id="SSF53448">
    <property type="entry name" value="Nucleotide-diphospho-sugar transferases"/>
    <property type="match status" value="1"/>
</dbReference>
<dbReference type="PROSITE" id="PS01295">
    <property type="entry name" value="ISPD"/>
    <property type="match status" value="1"/>
</dbReference>
<accession>Q1QU73</accession>
<organism>
    <name type="scientific">Chromohalobacter salexigens (strain ATCC BAA-138 / DSM 3043 / CIP 106854 / NCIMB 13768 / 1H11)</name>
    <dbReference type="NCBI Taxonomy" id="290398"/>
    <lineage>
        <taxon>Bacteria</taxon>
        <taxon>Pseudomonadati</taxon>
        <taxon>Pseudomonadota</taxon>
        <taxon>Gammaproteobacteria</taxon>
        <taxon>Oceanospirillales</taxon>
        <taxon>Halomonadaceae</taxon>
        <taxon>Chromohalobacter</taxon>
    </lineage>
</organism>
<gene>
    <name evidence="1" type="primary">ispD</name>
    <name type="ordered locus">Csal_2638</name>
</gene>
<sequence>MSRLWLIVPAAGQGRRMGAECPKQYLDIAGRPVLAHTLARLHEAFPEAALRLCLDPDDTRFSPEWVPFADWQRVAGGRERVDSVENALASLADVAADDDLVLVHDVARPCVAVEDLRRLREALTTSPEGGLLAAPVADTMKRADARGHVVHTVSREGLWHAMTPQGAPYRVLCRAFAHARGAGVVLTDEASALEAWGLAPRLVPGRRDNLKITHPEDLALATRLLAGDPASRRATGALSDDSLADEARS</sequence>
<feature type="chain" id="PRO_1000094321" description="2-C-methyl-D-erythritol 4-phosphate cytidylyltransferase">
    <location>
        <begin position="1"/>
        <end position="249"/>
    </location>
</feature>
<feature type="site" description="Transition state stabilizer" evidence="1">
    <location>
        <position position="16"/>
    </location>
</feature>
<feature type="site" description="Transition state stabilizer" evidence="1">
    <location>
        <position position="23"/>
    </location>
</feature>
<feature type="site" description="Positions MEP for the nucleophilic attack" evidence="1">
    <location>
        <position position="155"/>
    </location>
</feature>
<feature type="site" description="Positions MEP for the nucleophilic attack" evidence="1">
    <location>
        <position position="211"/>
    </location>
</feature>
<name>ISPD_CHRSD</name>
<reference key="1">
    <citation type="journal article" date="2011" name="Stand. Genomic Sci.">
        <title>Complete genome sequence of the halophilic and highly halotolerant Chromohalobacter salexigens type strain (1H11(T)).</title>
        <authorList>
            <person name="Copeland A."/>
            <person name="O'Connor K."/>
            <person name="Lucas S."/>
            <person name="Lapidus A."/>
            <person name="Berry K.W."/>
            <person name="Detter J.C."/>
            <person name="Del Rio T.G."/>
            <person name="Hammon N."/>
            <person name="Dalin E."/>
            <person name="Tice H."/>
            <person name="Pitluck S."/>
            <person name="Bruce D."/>
            <person name="Goodwin L."/>
            <person name="Han C."/>
            <person name="Tapia R."/>
            <person name="Saunders E."/>
            <person name="Schmutz J."/>
            <person name="Brettin T."/>
            <person name="Larimer F."/>
            <person name="Land M."/>
            <person name="Hauser L."/>
            <person name="Vargas C."/>
            <person name="Nieto J.J."/>
            <person name="Kyrpides N.C."/>
            <person name="Ivanova N."/>
            <person name="Goker M."/>
            <person name="Klenk H.P."/>
            <person name="Csonka L.N."/>
            <person name="Woyke T."/>
        </authorList>
    </citation>
    <scope>NUCLEOTIDE SEQUENCE [LARGE SCALE GENOMIC DNA]</scope>
    <source>
        <strain>ATCC BAA-138 / DSM 3043 / CIP 106854 / NCIMB 13768 / 1H11</strain>
    </source>
</reference>
<evidence type="ECO:0000255" key="1">
    <source>
        <dbReference type="HAMAP-Rule" id="MF_00108"/>
    </source>
</evidence>
<keyword id="KW-0414">Isoprene biosynthesis</keyword>
<keyword id="KW-0548">Nucleotidyltransferase</keyword>
<keyword id="KW-1185">Reference proteome</keyword>
<keyword id="KW-0808">Transferase</keyword>
<comment type="function">
    <text evidence="1">Catalyzes the formation of 4-diphosphocytidyl-2-C-methyl-D-erythritol from CTP and 2-C-methyl-D-erythritol 4-phosphate (MEP).</text>
</comment>
<comment type="catalytic activity">
    <reaction evidence="1">
        <text>2-C-methyl-D-erythritol 4-phosphate + CTP + H(+) = 4-CDP-2-C-methyl-D-erythritol + diphosphate</text>
        <dbReference type="Rhea" id="RHEA:13429"/>
        <dbReference type="ChEBI" id="CHEBI:15378"/>
        <dbReference type="ChEBI" id="CHEBI:33019"/>
        <dbReference type="ChEBI" id="CHEBI:37563"/>
        <dbReference type="ChEBI" id="CHEBI:57823"/>
        <dbReference type="ChEBI" id="CHEBI:58262"/>
        <dbReference type="EC" id="2.7.7.60"/>
    </reaction>
</comment>
<comment type="pathway">
    <text evidence="1">Isoprenoid biosynthesis; isopentenyl diphosphate biosynthesis via DXP pathway; isopentenyl diphosphate from 1-deoxy-D-xylulose 5-phosphate: step 2/6.</text>
</comment>
<comment type="similarity">
    <text evidence="1">Belongs to the IspD/TarI cytidylyltransferase family. IspD subfamily.</text>
</comment>
<protein>
    <recommendedName>
        <fullName evidence="1">2-C-methyl-D-erythritol 4-phosphate cytidylyltransferase</fullName>
        <ecNumber evidence="1">2.7.7.60</ecNumber>
    </recommendedName>
    <alternativeName>
        <fullName evidence="1">4-diphosphocytidyl-2C-methyl-D-erythritol synthase</fullName>
    </alternativeName>
    <alternativeName>
        <fullName evidence="1">MEP cytidylyltransferase</fullName>
        <shortName evidence="1">MCT</shortName>
    </alternativeName>
</protein>
<proteinExistence type="inferred from homology"/>